<comment type="function">
    <text evidence="1">Binds directly to 16S ribosomal RNA.</text>
</comment>
<comment type="similarity">
    <text evidence="1">Belongs to the bacterial ribosomal protein bS20 family.</text>
</comment>
<dbReference type="EMBL" id="CP000887">
    <property type="protein sequence ID" value="ACD73529.1"/>
    <property type="molecule type" value="Genomic_DNA"/>
</dbReference>
<dbReference type="RefSeq" id="WP_002965247.1">
    <property type="nucleotide sequence ID" value="NC_010742.1"/>
</dbReference>
<dbReference type="SMR" id="B2S9T4"/>
<dbReference type="GeneID" id="97534562"/>
<dbReference type="KEGG" id="bmc:BAbS19_I20470"/>
<dbReference type="HOGENOM" id="CLU_160655_3_0_5"/>
<dbReference type="Proteomes" id="UP000002565">
    <property type="component" value="Chromosome 1"/>
</dbReference>
<dbReference type="GO" id="GO:0015935">
    <property type="term" value="C:small ribosomal subunit"/>
    <property type="evidence" value="ECO:0007669"/>
    <property type="project" value="TreeGrafter"/>
</dbReference>
<dbReference type="GO" id="GO:0070181">
    <property type="term" value="F:small ribosomal subunit rRNA binding"/>
    <property type="evidence" value="ECO:0007669"/>
    <property type="project" value="TreeGrafter"/>
</dbReference>
<dbReference type="GO" id="GO:0003735">
    <property type="term" value="F:structural constituent of ribosome"/>
    <property type="evidence" value="ECO:0007669"/>
    <property type="project" value="InterPro"/>
</dbReference>
<dbReference type="GO" id="GO:0006412">
    <property type="term" value="P:translation"/>
    <property type="evidence" value="ECO:0007669"/>
    <property type="project" value="UniProtKB-UniRule"/>
</dbReference>
<dbReference type="FunFam" id="1.20.58.110:FF:000001">
    <property type="entry name" value="30S ribosomal protein S20"/>
    <property type="match status" value="1"/>
</dbReference>
<dbReference type="Gene3D" id="1.20.58.110">
    <property type="entry name" value="Ribosomal protein S20"/>
    <property type="match status" value="1"/>
</dbReference>
<dbReference type="HAMAP" id="MF_00500">
    <property type="entry name" value="Ribosomal_bS20"/>
    <property type="match status" value="1"/>
</dbReference>
<dbReference type="InterPro" id="IPR002583">
    <property type="entry name" value="Ribosomal_bS20"/>
</dbReference>
<dbReference type="InterPro" id="IPR036510">
    <property type="entry name" value="Ribosomal_bS20_sf"/>
</dbReference>
<dbReference type="NCBIfam" id="TIGR00029">
    <property type="entry name" value="S20"/>
    <property type="match status" value="1"/>
</dbReference>
<dbReference type="PANTHER" id="PTHR33398">
    <property type="entry name" value="30S RIBOSOMAL PROTEIN S20"/>
    <property type="match status" value="1"/>
</dbReference>
<dbReference type="PANTHER" id="PTHR33398:SF1">
    <property type="entry name" value="SMALL RIBOSOMAL SUBUNIT PROTEIN BS20C"/>
    <property type="match status" value="1"/>
</dbReference>
<dbReference type="Pfam" id="PF01649">
    <property type="entry name" value="Ribosomal_S20p"/>
    <property type="match status" value="1"/>
</dbReference>
<dbReference type="SUPFAM" id="SSF46992">
    <property type="entry name" value="Ribosomal protein S20"/>
    <property type="match status" value="1"/>
</dbReference>
<protein>
    <recommendedName>
        <fullName evidence="1">Small ribosomal subunit protein bS20</fullName>
    </recommendedName>
    <alternativeName>
        <fullName evidence="2">30S ribosomal protein S20</fullName>
    </alternativeName>
</protein>
<keyword id="KW-0687">Ribonucleoprotein</keyword>
<keyword id="KW-0689">Ribosomal protein</keyword>
<keyword id="KW-0694">RNA-binding</keyword>
<keyword id="KW-0699">rRNA-binding</keyword>
<sequence length="88" mass="9669">MANTPSAKKAVRKIAARTEINKSRRSRVRTFVRKLEDALLSGDKQAAEVAFKAVEPELMRAASKGVVHKNTAARKVSRLAKRVKALNA</sequence>
<organism>
    <name type="scientific">Brucella abortus (strain S19)</name>
    <dbReference type="NCBI Taxonomy" id="430066"/>
    <lineage>
        <taxon>Bacteria</taxon>
        <taxon>Pseudomonadati</taxon>
        <taxon>Pseudomonadota</taxon>
        <taxon>Alphaproteobacteria</taxon>
        <taxon>Hyphomicrobiales</taxon>
        <taxon>Brucellaceae</taxon>
        <taxon>Brucella/Ochrobactrum group</taxon>
        <taxon>Brucella</taxon>
    </lineage>
</organism>
<accession>B2S9T4</accession>
<reference key="1">
    <citation type="journal article" date="2008" name="PLoS ONE">
        <title>Genome sequence of Brucella abortus vaccine strain S19 compared to virulent strains yields candidate virulence genes.</title>
        <authorList>
            <person name="Crasta O.R."/>
            <person name="Folkerts O."/>
            <person name="Fei Z."/>
            <person name="Mane S.P."/>
            <person name="Evans C."/>
            <person name="Martino-Catt S."/>
            <person name="Bricker B."/>
            <person name="Yu G."/>
            <person name="Du L."/>
            <person name="Sobral B.W."/>
        </authorList>
    </citation>
    <scope>NUCLEOTIDE SEQUENCE [LARGE SCALE GENOMIC DNA]</scope>
    <source>
        <strain>S19</strain>
    </source>
</reference>
<gene>
    <name evidence="1" type="primary">rpsT</name>
    <name type="ordered locus">BAbS19_I20470</name>
</gene>
<feature type="chain" id="PRO_1000126407" description="Small ribosomal subunit protein bS20">
    <location>
        <begin position="1"/>
        <end position="88"/>
    </location>
</feature>
<name>RS20_BRUA1</name>
<evidence type="ECO:0000255" key="1">
    <source>
        <dbReference type="HAMAP-Rule" id="MF_00500"/>
    </source>
</evidence>
<evidence type="ECO:0000305" key="2"/>
<proteinExistence type="inferred from homology"/>